<dbReference type="EC" id="2.3.1.274" evidence="1"/>
<dbReference type="EMBL" id="FM204884">
    <property type="protein sequence ID" value="CAW97593.1"/>
    <property type="molecule type" value="Genomic_DNA"/>
</dbReference>
<dbReference type="SMR" id="C0MC99"/>
<dbReference type="KEGG" id="seq:SZO_00230"/>
<dbReference type="eggNOG" id="COG0416">
    <property type="taxonomic scope" value="Bacteria"/>
</dbReference>
<dbReference type="HOGENOM" id="CLU_039379_1_1_9"/>
<dbReference type="UniPathway" id="UPA00085"/>
<dbReference type="Proteomes" id="UP000001368">
    <property type="component" value="Chromosome"/>
</dbReference>
<dbReference type="GO" id="GO:0005737">
    <property type="term" value="C:cytoplasm"/>
    <property type="evidence" value="ECO:0007669"/>
    <property type="project" value="UniProtKB-SubCell"/>
</dbReference>
<dbReference type="GO" id="GO:0043811">
    <property type="term" value="F:phosphate:acyl-[acyl carrier protein] acyltransferase activity"/>
    <property type="evidence" value="ECO:0007669"/>
    <property type="project" value="UniProtKB-UniRule"/>
</dbReference>
<dbReference type="GO" id="GO:0006633">
    <property type="term" value="P:fatty acid biosynthetic process"/>
    <property type="evidence" value="ECO:0007669"/>
    <property type="project" value="UniProtKB-UniRule"/>
</dbReference>
<dbReference type="GO" id="GO:0008654">
    <property type="term" value="P:phospholipid biosynthetic process"/>
    <property type="evidence" value="ECO:0007669"/>
    <property type="project" value="UniProtKB-KW"/>
</dbReference>
<dbReference type="Gene3D" id="3.40.718.10">
    <property type="entry name" value="Isopropylmalate Dehydrogenase"/>
    <property type="match status" value="1"/>
</dbReference>
<dbReference type="HAMAP" id="MF_00019">
    <property type="entry name" value="PlsX"/>
    <property type="match status" value="1"/>
</dbReference>
<dbReference type="InterPro" id="IPR003664">
    <property type="entry name" value="FA_synthesis"/>
</dbReference>
<dbReference type="InterPro" id="IPR012281">
    <property type="entry name" value="Phospholipid_synth_PlsX-like"/>
</dbReference>
<dbReference type="NCBIfam" id="TIGR00182">
    <property type="entry name" value="plsX"/>
    <property type="match status" value="1"/>
</dbReference>
<dbReference type="PANTHER" id="PTHR30100">
    <property type="entry name" value="FATTY ACID/PHOSPHOLIPID SYNTHESIS PROTEIN PLSX"/>
    <property type="match status" value="1"/>
</dbReference>
<dbReference type="PANTHER" id="PTHR30100:SF1">
    <property type="entry name" value="PHOSPHATE ACYLTRANSFERASE"/>
    <property type="match status" value="1"/>
</dbReference>
<dbReference type="Pfam" id="PF02504">
    <property type="entry name" value="FA_synthesis"/>
    <property type="match status" value="1"/>
</dbReference>
<dbReference type="PIRSF" id="PIRSF002465">
    <property type="entry name" value="Phsphlp_syn_PlsX"/>
    <property type="match status" value="1"/>
</dbReference>
<dbReference type="SUPFAM" id="SSF53659">
    <property type="entry name" value="Isocitrate/Isopropylmalate dehydrogenase-like"/>
    <property type="match status" value="1"/>
</dbReference>
<sequence>MKKIAIDAMGGDHAPKAIVEGVNQAIEAFSDIEIQLYGDQSRIESYLVKSDRVSIVHTDEKINSDDEPAKAIRRKKNASMVLAARAVKDGRADAVLSAGNTGALLAAGLFIIGRIKGVDRPGLLSTLPTVDGSGFDMLDLGANAENTAEHLHQYAILGSFYAKHVRGIAKPRIGLLNNGTEATKGDSLRKEVYKLLASDSSLQFIGNVEARDLMSGVADVVVADGFTGNAVLKSIEGTAMSIMGQLKSAIAVGGVKAKLGALLLKGSLYDLKDTLDYSSAGGAVLFGLKAPLVKSHGSSDAKAIFHTIKQVRTMLETDVVGQLVEEFSKESDAND</sequence>
<evidence type="ECO:0000255" key="1">
    <source>
        <dbReference type="HAMAP-Rule" id="MF_00019"/>
    </source>
</evidence>
<name>PLSX_STRS7</name>
<accession>C0MC99</accession>
<organism>
    <name type="scientific">Streptococcus equi subsp. zooepidemicus (strain H70)</name>
    <dbReference type="NCBI Taxonomy" id="553483"/>
    <lineage>
        <taxon>Bacteria</taxon>
        <taxon>Bacillati</taxon>
        <taxon>Bacillota</taxon>
        <taxon>Bacilli</taxon>
        <taxon>Lactobacillales</taxon>
        <taxon>Streptococcaceae</taxon>
        <taxon>Streptococcus</taxon>
    </lineage>
</organism>
<protein>
    <recommendedName>
        <fullName evidence="1">Phosphate acyltransferase</fullName>
        <ecNumber evidence="1">2.3.1.274</ecNumber>
    </recommendedName>
    <alternativeName>
        <fullName evidence="1">Acyl-ACP phosphotransacylase</fullName>
    </alternativeName>
    <alternativeName>
        <fullName evidence="1">Acyl-[acyl-carrier-protein]--phosphate acyltransferase</fullName>
    </alternativeName>
    <alternativeName>
        <fullName evidence="1">Phosphate-acyl-ACP acyltransferase</fullName>
    </alternativeName>
</protein>
<keyword id="KW-0963">Cytoplasm</keyword>
<keyword id="KW-0444">Lipid biosynthesis</keyword>
<keyword id="KW-0443">Lipid metabolism</keyword>
<keyword id="KW-0594">Phospholipid biosynthesis</keyword>
<keyword id="KW-1208">Phospholipid metabolism</keyword>
<keyword id="KW-0808">Transferase</keyword>
<comment type="function">
    <text evidence="1">Catalyzes the reversible formation of acyl-phosphate (acyl-PO(4)) from acyl-[acyl-carrier-protein] (acyl-ACP). This enzyme utilizes acyl-ACP as fatty acyl donor, but not acyl-CoA.</text>
</comment>
<comment type="catalytic activity">
    <reaction evidence="1">
        <text>a fatty acyl-[ACP] + phosphate = an acyl phosphate + holo-[ACP]</text>
        <dbReference type="Rhea" id="RHEA:42292"/>
        <dbReference type="Rhea" id="RHEA-COMP:9685"/>
        <dbReference type="Rhea" id="RHEA-COMP:14125"/>
        <dbReference type="ChEBI" id="CHEBI:43474"/>
        <dbReference type="ChEBI" id="CHEBI:59918"/>
        <dbReference type="ChEBI" id="CHEBI:64479"/>
        <dbReference type="ChEBI" id="CHEBI:138651"/>
        <dbReference type="EC" id="2.3.1.274"/>
    </reaction>
</comment>
<comment type="pathway">
    <text evidence="1">Lipid metabolism; phospholipid metabolism.</text>
</comment>
<comment type="subunit">
    <text evidence="1">Homodimer. Probably interacts with PlsY.</text>
</comment>
<comment type="subcellular location">
    <subcellularLocation>
        <location evidence="1">Cytoplasm</location>
    </subcellularLocation>
    <text evidence="1">Associated with the membrane possibly through PlsY.</text>
</comment>
<comment type="similarity">
    <text evidence="1">Belongs to the PlsX family.</text>
</comment>
<reference key="1">
    <citation type="journal article" date="2009" name="PLoS Pathog.">
        <title>Genomic evidence for the evolution of Streptococcus equi: host restriction, increased virulence, and genetic exchange with human pathogens.</title>
        <authorList>
            <person name="Holden M.T.G."/>
            <person name="Heather Z."/>
            <person name="Paillot R."/>
            <person name="Steward K.F."/>
            <person name="Webb K."/>
            <person name="Ainslie F."/>
            <person name="Jourdan T."/>
            <person name="Bason N.C."/>
            <person name="Holroyd N.E."/>
            <person name="Mungall K."/>
            <person name="Quail M.A."/>
            <person name="Sanders M."/>
            <person name="Simmonds M."/>
            <person name="Willey D."/>
            <person name="Brooks K."/>
            <person name="Aanensen D.M."/>
            <person name="Spratt B.G."/>
            <person name="Jolley K.A."/>
            <person name="Maiden M.C.J."/>
            <person name="Kehoe M."/>
            <person name="Chanter N."/>
            <person name="Bentley S.D."/>
            <person name="Robinson C."/>
            <person name="Maskell D.J."/>
            <person name="Parkhill J."/>
            <person name="Waller A.S."/>
        </authorList>
    </citation>
    <scope>NUCLEOTIDE SEQUENCE [LARGE SCALE GENOMIC DNA]</scope>
    <source>
        <strain>H70</strain>
    </source>
</reference>
<gene>
    <name evidence="1" type="primary">plsX</name>
    <name type="ordered locus">SZO_00230</name>
</gene>
<feature type="chain" id="PRO_1000201897" description="Phosphate acyltransferase">
    <location>
        <begin position="1"/>
        <end position="335"/>
    </location>
</feature>
<proteinExistence type="inferred from homology"/>